<comment type="function">
    <text evidence="3">Protease involved in the C-terminal processing of the chloroplastic D1 protein of photosystem II. This proteolytic processing is necessary to allow the light-driven assembly of the tetranuclear manganese cluster, which is responsible for photosynthetic water oxidation.</text>
</comment>
<comment type="catalytic activity">
    <reaction>
        <text>The enzyme shows specific recognition of a C-terminal tripeptide, Xaa-Yaa-Zaa, in which Xaa is preferably Ala or Leu, Yaa is preferably Ala or Tyr, and Zaa is preferably Ala, but then cleaves at a variable distance from the C-terminus. A typical cleavage is -Ala-Ala-|-Arg-Ala-Ala-Lys-Glu-Asn-Tyr-Ala-Leu-Ala-Ala.</text>
        <dbReference type="EC" id="3.4.21.102"/>
    </reaction>
</comment>
<comment type="subcellular location">
    <subcellularLocation>
        <location evidence="2">Plastid</location>
        <location evidence="2">Chloroplast thylakoid lumen</location>
    </subcellularLocation>
</comment>
<comment type="similarity">
    <text evidence="6">Belongs to the peptidase S41A family.</text>
</comment>
<comment type="sequence caution" evidence="6">
    <conflict type="erroneous gene model prediction">
        <sequence resource="EMBL-CDS" id="CAB41187"/>
    </conflict>
</comment>
<protein>
    <recommendedName>
        <fullName>Carboxyl-terminal-processing peptidase 3, chloroplastic</fullName>
        <ecNumber>3.4.21.102</ecNumber>
    </recommendedName>
    <alternativeName>
        <fullName>D1 C-terminal processing protease 3</fullName>
    </alternativeName>
    <alternativeName>
        <fullName>Photosystem II D1 protein processing peptidase 3</fullName>
    </alternativeName>
</protein>
<sequence length="519" mass="56205">MEKVVTLNHDLPLLHFPNSRKPFSIPSPILRISSFKRHKKRSCLASSSRLGFYTETKTVSESHGVIVDNSTIGRRLLGLAAAVSVAVSLSIFCDSPALAESLTIAFPVSRAREVTTVQRTLVEAWGLIRETFVDPTFNHQDWDFKLQQTMVEMFPLRSADAAYGKLKAMLSTLGDPFTRLITPKEYQSFRIGSDGNLQGVGLFINSEPRTGHLVVMSCVEGSPADRAGIHEGEELVEINGEKLDDVDSEAAAQKLRGRVGTFVTIKLKNVNGSGTDSGIREVKLPRDYIKLSPISSAIIPHTTPDGRLAKTGYVKLTAFSQTAASDMENAVHEMENQDVQSYILDLRNNPGGLVRAGLDVAQLWLDGDETLVYTIDREGVTSPINMINGHAVTHDPLVVLVNEGSASASEILAGALHDNGRAILVGNRTFGKGKIQSITELNDGSALFVTVAKYLSPSLHEIDQVGIAPDVQCTTGMIDSLTAEIVEKMNSSVPLLEADSCVMVAEHELEARRSNGTAS</sequence>
<evidence type="ECO:0000250" key="1"/>
<evidence type="ECO:0000250" key="2">
    <source>
        <dbReference type="UniProtKB" id="F4KHG6"/>
    </source>
</evidence>
<evidence type="ECO:0000250" key="3">
    <source>
        <dbReference type="UniProtKB" id="O04073"/>
    </source>
</evidence>
<evidence type="ECO:0000255" key="4"/>
<evidence type="ECO:0000255" key="5">
    <source>
        <dbReference type="PROSITE-ProRule" id="PRU00143"/>
    </source>
</evidence>
<evidence type="ECO:0000305" key="6"/>
<reference key="1">
    <citation type="journal article" date="2000" name="Nature">
        <title>Sequence and analysis of chromosome 3 of the plant Arabidopsis thaliana.</title>
        <authorList>
            <person name="Salanoubat M."/>
            <person name="Lemcke K."/>
            <person name="Rieger M."/>
            <person name="Ansorge W."/>
            <person name="Unseld M."/>
            <person name="Fartmann B."/>
            <person name="Valle G."/>
            <person name="Bloecker H."/>
            <person name="Perez-Alonso M."/>
            <person name="Obermaier B."/>
            <person name="Delseny M."/>
            <person name="Boutry M."/>
            <person name="Grivell L.A."/>
            <person name="Mache R."/>
            <person name="Puigdomenech P."/>
            <person name="De Simone V."/>
            <person name="Choisne N."/>
            <person name="Artiguenave F."/>
            <person name="Robert C."/>
            <person name="Brottier P."/>
            <person name="Wincker P."/>
            <person name="Cattolico L."/>
            <person name="Weissenbach J."/>
            <person name="Saurin W."/>
            <person name="Quetier F."/>
            <person name="Schaefer M."/>
            <person name="Mueller-Auer S."/>
            <person name="Gabel C."/>
            <person name="Fuchs M."/>
            <person name="Benes V."/>
            <person name="Wurmbach E."/>
            <person name="Drzonek H."/>
            <person name="Erfle H."/>
            <person name="Jordan N."/>
            <person name="Bangert S."/>
            <person name="Wiedelmann R."/>
            <person name="Kranz H."/>
            <person name="Voss H."/>
            <person name="Holland R."/>
            <person name="Brandt P."/>
            <person name="Nyakatura G."/>
            <person name="Vezzi A."/>
            <person name="D'Angelo M."/>
            <person name="Pallavicini A."/>
            <person name="Toppo S."/>
            <person name="Simionati B."/>
            <person name="Conrad A."/>
            <person name="Hornischer K."/>
            <person name="Kauer G."/>
            <person name="Loehnert T.-H."/>
            <person name="Nordsiek G."/>
            <person name="Reichelt J."/>
            <person name="Scharfe M."/>
            <person name="Schoen O."/>
            <person name="Bargues M."/>
            <person name="Terol J."/>
            <person name="Climent J."/>
            <person name="Navarro P."/>
            <person name="Collado C."/>
            <person name="Perez-Perez A."/>
            <person name="Ottenwaelder B."/>
            <person name="Duchemin D."/>
            <person name="Cooke R."/>
            <person name="Laudie M."/>
            <person name="Berger-Llauro C."/>
            <person name="Purnelle B."/>
            <person name="Masuy D."/>
            <person name="de Haan M."/>
            <person name="Maarse A.C."/>
            <person name="Alcaraz J.-P."/>
            <person name="Cottet A."/>
            <person name="Casacuberta E."/>
            <person name="Monfort A."/>
            <person name="Argiriou A."/>
            <person name="Flores M."/>
            <person name="Liguori R."/>
            <person name="Vitale D."/>
            <person name="Mannhaupt G."/>
            <person name="Haase D."/>
            <person name="Schoof H."/>
            <person name="Rudd S."/>
            <person name="Zaccaria P."/>
            <person name="Mewes H.-W."/>
            <person name="Mayer K.F.X."/>
            <person name="Kaul S."/>
            <person name="Town C.D."/>
            <person name="Koo H.L."/>
            <person name="Tallon L.J."/>
            <person name="Jenkins J."/>
            <person name="Rooney T."/>
            <person name="Rizzo M."/>
            <person name="Walts A."/>
            <person name="Utterback T."/>
            <person name="Fujii C.Y."/>
            <person name="Shea T.P."/>
            <person name="Creasy T.H."/>
            <person name="Haas B."/>
            <person name="Maiti R."/>
            <person name="Wu D."/>
            <person name="Peterson J."/>
            <person name="Van Aken S."/>
            <person name="Pai G."/>
            <person name="Militscher J."/>
            <person name="Sellers P."/>
            <person name="Gill J.E."/>
            <person name="Feldblyum T.V."/>
            <person name="Preuss D."/>
            <person name="Lin X."/>
            <person name="Nierman W.C."/>
            <person name="Salzberg S.L."/>
            <person name="White O."/>
            <person name="Venter J.C."/>
            <person name="Fraser C.M."/>
            <person name="Kaneko T."/>
            <person name="Nakamura Y."/>
            <person name="Sato S."/>
            <person name="Kato T."/>
            <person name="Asamizu E."/>
            <person name="Sasamoto S."/>
            <person name="Kimura T."/>
            <person name="Idesawa K."/>
            <person name="Kawashima K."/>
            <person name="Kishida Y."/>
            <person name="Kiyokawa C."/>
            <person name="Kohara M."/>
            <person name="Matsumoto M."/>
            <person name="Matsuno A."/>
            <person name="Muraki A."/>
            <person name="Nakayama S."/>
            <person name="Nakazaki N."/>
            <person name="Shinpo S."/>
            <person name="Takeuchi C."/>
            <person name="Wada T."/>
            <person name="Watanabe A."/>
            <person name="Yamada M."/>
            <person name="Yasuda M."/>
            <person name="Tabata S."/>
        </authorList>
    </citation>
    <scope>NUCLEOTIDE SEQUENCE [LARGE SCALE GENOMIC DNA]</scope>
    <source>
        <strain>cv. Columbia</strain>
    </source>
</reference>
<reference key="2">
    <citation type="journal article" date="2017" name="Plant J.">
        <title>Araport11: a complete reannotation of the Arabidopsis thaliana reference genome.</title>
        <authorList>
            <person name="Cheng C.Y."/>
            <person name="Krishnakumar V."/>
            <person name="Chan A.P."/>
            <person name="Thibaud-Nissen F."/>
            <person name="Schobel S."/>
            <person name="Town C.D."/>
        </authorList>
    </citation>
    <scope>GENOME REANNOTATION</scope>
    <source>
        <strain>cv. Columbia</strain>
    </source>
</reference>
<reference key="3">
    <citation type="journal article" date="2006" name="BMC Genomics">
        <title>Cross genome comparisons of serine proteases in Arabidopsis and rice.</title>
        <authorList>
            <person name="Tripathi L.P."/>
            <person name="Sowdhamini R."/>
        </authorList>
    </citation>
    <scope>REVIEW</scope>
</reference>
<gene>
    <name type="primary">CTPA3</name>
    <name type="ordered locus">At3g57680</name>
    <name type="ORF">F15B8.130</name>
</gene>
<organism>
    <name type="scientific">Arabidopsis thaliana</name>
    <name type="common">Mouse-ear cress</name>
    <dbReference type="NCBI Taxonomy" id="3702"/>
    <lineage>
        <taxon>Eukaryota</taxon>
        <taxon>Viridiplantae</taxon>
        <taxon>Streptophyta</taxon>
        <taxon>Embryophyta</taxon>
        <taxon>Tracheophyta</taxon>
        <taxon>Spermatophyta</taxon>
        <taxon>Magnoliopsida</taxon>
        <taxon>eudicotyledons</taxon>
        <taxon>Gunneridae</taxon>
        <taxon>Pentapetalae</taxon>
        <taxon>rosids</taxon>
        <taxon>malvids</taxon>
        <taxon>Brassicales</taxon>
        <taxon>Brassicaceae</taxon>
        <taxon>Camelineae</taxon>
        <taxon>Arabidopsis</taxon>
    </lineage>
</organism>
<keyword id="KW-0150">Chloroplast</keyword>
<keyword id="KW-0378">Hydrolase</keyword>
<keyword id="KW-0934">Plastid</keyword>
<keyword id="KW-0645">Protease</keyword>
<keyword id="KW-1185">Reference proteome</keyword>
<keyword id="KW-0720">Serine protease</keyword>
<keyword id="KW-0793">Thylakoid</keyword>
<keyword id="KW-0809">Transit peptide</keyword>
<feature type="transit peptide" description="Chloroplast" evidence="4">
    <location>
        <begin position="1"/>
        <end status="unknown"/>
    </location>
</feature>
<feature type="transit peptide" description="Thylakoid" evidence="4">
    <location>
        <begin status="unknown"/>
        <end position="113"/>
    </location>
</feature>
<feature type="chain" id="PRO_0000429323" description="Carboxyl-terminal-processing peptidase 3, chloroplastic">
    <location>
        <begin position="114"/>
        <end position="519"/>
    </location>
</feature>
<feature type="domain" description="PDZ" evidence="5">
    <location>
        <begin position="186"/>
        <end position="274"/>
    </location>
</feature>
<feature type="active site" description="Charge relay system" evidence="1">
    <location>
        <position position="407"/>
    </location>
</feature>
<feature type="active site" description="Charge relay system" evidence="1">
    <location>
        <position position="432"/>
    </location>
</feature>
<accession>F4J3G5</accession>
<accession>Q9SVY2</accession>
<dbReference type="EC" id="3.4.21.102"/>
<dbReference type="EMBL" id="AL049660">
    <property type="protein sequence ID" value="CAB41187.1"/>
    <property type="status" value="ALT_SEQ"/>
    <property type="molecule type" value="Genomic_DNA"/>
</dbReference>
<dbReference type="EMBL" id="CP002686">
    <property type="protein sequence ID" value="AEE79686.1"/>
    <property type="molecule type" value="Genomic_DNA"/>
</dbReference>
<dbReference type="PIR" id="T06752">
    <property type="entry name" value="T06752"/>
</dbReference>
<dbReference type="RefSeq" id="NP_191327.4">
    <property type="nucleotide sequence ID" value="NM_115628.5"/>
</dbReference>
<dbReference type="SMR" id="F4J3G5"/>
<dbReference type="FunCoup" id="F4J3G5">
    <property type="interactions" value="5"/>
</dbReference>
<dbReference type="STRING" id="3702.F4J3G5"/>
<dbReference type="MEROPS" id="S41.A01"/>
<dbReference type="PaxDb" id="3702-AT3G57680.1"/>
<dbReference type="ProteomicsDB" id="220455"/>
<dbReference type="EnsemblPlants" id="AT3G57680.1">
    <property type="protein sequence ID" value="AT3G57680.1"/>
    <property type="gene ID" value="AT3G57680"/>
</dbReference>
<dbReference type="GeneID" id="824937"/>
<dbReference type="Gramene" id="AT3G57680.1">
    <property type="protein sequence ID" value="AT3G57680.1"/>
    <property type="gene ID" value="AT3G57680"/>
</dbReference>
<dbReference type="KEGG" id="ath:AT3G57680"/>
<dbReference type="Araport" id="AT3G57680"/>
<dbReference type="TAIR" id="AT3G57680"/>
<dbReference type="eggNOG" id="ENOG502QQVV">
    <property type="taxonomic scope" value="Eukaryota"/>
</dbReference>
<dbReference type="HOGENOM" id="CLU_017295_0_0_1"/>
<dbReference type="InParanoid" id="F4J3G5"/>
<dbReference type="PRO" id="PR:F4J3G5"/>
<dbReference type="Proteomes" id="UP000006548">
    <property type="component" value="Chromosome 3"/>
</dbReference>
<dbReference type="ExpressionAtlas" id="F4J3G5">
    <property type="expression patterns" value="baseline and differential"/>
</dbReference>
<dbReference type="GO" id="GO:0009543">
    <property type="term" value="C:chloroplast thylakoid lumen"/>
    <property type="evidence" value="ECO:0007669"/>
    <property type="project" value="UniProtKB-SubCell"/>
</dbReference>
<dbReference type="GO" id="GO:0004252">
    <property type="term" value="F:serine-type endopeptidase activity"/>
    <property type="evidence" value="ECO:0007669"/>
    <property type="project" value="UniProtKB-EC"/>
</dbReference>
<dbReference type="GO" id="GO:0006508">
    <property type="term" value="P:proteolysis"/>
    <property type="evidence" value="ECO:0007669"/>
    <property type="project" value="UniProtKB-KW"/>
</dbReference>
<dbReference type="CDD" id="cd06782">
    <property type="entry name" value="cpPDZ_CPP-like"/>
    <property type="match status" value="1"/>
</dbReference>
<dbReference type="CDD" id="cd07560">
    <property type="entry name" value="Peptidase_S41_CPP"/>
    <property type="match status" value="1"/>
</dbReference>
<dbReference type="FunFam" id="3.90.226.10:FF:000023">
    <property type="entry name" value="Carboxyl-terminal processing protease"/>
    <property type="match status" value="1"/>
</dbReference>
<dbReference type="FunFam" id="3.30.750.44:FF:000002">
    <property type="entry name" value="carboxyl-terminal-processing peptidase 2, chloroplastic"/>
    <property type="match status" value="1"/>
</dbReference>
<dbReference type="FunFam" id="2.30.42.10:FF:000063">
    <property type="entry name" value="Peptidase, S41 family"/>
    <property type="match status" value="1"/>
</dbReference>
<dbReference type="Gene3D" id="2.30.42.10">
    <property type="match status" value="1"/>
</dbReference>
<dbReference type="Gene3D" id="3.30.750.44">
    <property type="match status" value="1"/>
</dbReference>
<dbReference type="Gene3D" id="3.90.226.10">
    <property type="entry name" value="2-enoyl-CoA Hydratase, Chain A, domain 1"/>
    <property type="match status" value="1"/>
</dbReference>
<dbReference type="InterPro" id="IPR029045">
    <property type="entry name" value="ClpP/crotonase-like_dom_sf"/>
</dbReference>
<dbReference type="InterPro" id="IPR001478">
    <property type="entry name" value="PDZ"/>
</dbReference>
<dbReference type="InterPro" id="IPR041489">
    <property type="entry name" value="PDZ_6"/>
</dbReference>
<dbReference type="InterPro" id="IPR036034">
    <property type="entry name" value="PDZ_sf"/>
</dbReference>
<dbReference type="InterPro" id="IPR004447">
    <property type="entry name" value="Peptidase_S41A"/>
</dbReference>
<dbReference type="InterPro" id="IPR005151">
    <property type="entry name" value="Tail-specific_protease"/>
</dbReference>
<dbReference type="NCBIfam" id="TIGR00225">
    <property type="entry name" value="prc"/>
    <property type="match status" value="1"/>
</dbReference>
<dbReference type="PANTHER" id="PTHR32060:SF22">
    <property type="entry name" value="CARBOXYL-TERMINAL-PROCESSING PEPTIDASE 3, CHLOROPLASTIC"/>
    <property type="match status" value="1"/>
</dbReference>
<dbReference type="PANTHER" id="PTHR32060">
    <property type="entry name" value="TAIL-SPECIFIC PROTEASE"/>
    <property type="match status" value="1"/>
</dbReference>
<dbReference type="Pfam" id="PF17820">
    <property type="entry name" value="PDZ_6"/>
    <property type="match status" value="1"/>
</dbReference>
<dbReference type="Pfam" id="PF03572">
    <property type="entry name" value="Peptidase_S41"/>
    <property type="match status" value="1"/>
</dbReference>
<dbReference type="SMART" id="SM00228">
    <property type="entry name" value="PDZ"/>
    <property type="match status" value="1"/>
</dbReference>
<dbReference type="SMART" id="SM00245">
    <property type="entry name" value="TSPc"/>
    <property type="match status" value="1"/>
</dbReference>
<dbReference type="SUPFAM" id="SSF52096">
    <property type="entry name" value="ClpP/crotonase"/>
    <property type="match status" value="1"/>
</dbReference>
<dbReference type="SUPFAM" id="SSF50156">
    <property type="entry name" value="PDZ domain-like"/>
    <property type="match status" value="1"/>
</dbReference>
<dbReference type="PROSITE" id="PS50106">
    <property type="entry name" value="PDZ"/>
    <property type="match status" value="1"/>
</dbReference>
<proteinExistence type="inferred from homology"/>
<name>CTPA3_ARATH</name>